<name>SYG_YEAST</name>
<protein>
    <recommendedName>
        <fullName>Glycine--tRNA ligase 1, mitochondrial</fullName>
        <ecNumber evidence="4">6.1.1.14</ecNumber>
    </recommendedName>
    <alternativeName>
        <fullName>Diadenosine tetraphosphate synthetase</fullName>
        <shortName>Ap4A synthetase</shortName>
        <ecNumber evidence="1">2.7.7.-</ecNumber>
    </alternativeName>
    <alternativeName>
        <fullName>Glycyl-tRNA synthetase 1</fullName>
        <shortName>GlyRS 1</shortName>
        <shortName>GlyRS1</shortName>
    </alternativeName>
</protein>
<dbReference type="EC" id="6.1.1.14" evidence="4"/>
<dbReference type="EC" id="2.7.7.-" evidence="1"/>
<dbReference type="EMBL" id="X78993">
    <property type="protein sequence ID" value="CAA55623.1"/>
    <property type="status" value="ALT_INIT"/>
    <property type="molecule type" value="Genomic_DNA"/>
</dbReference>
<dbReference type="EMBL" id="Z35990">
    <property type="protein sequence ID" value="CAA85078.1"/>
    <property type="status" value="ALT_INIT"/>
    <property type="molecule type" value="Genomic_DNA"/>
</dbReference>
<dbReference type="EMBL" id="BK006936">
    <property type="protein sequence ID" value="DAA07239.2"/>
    <property type="status" value="ALT_INIT"/>
    <property type="molecule type" value="Genomic_DNA"/>
</dbReference>
<dbReference type="PIR" id="S48285">
    <property type="entry name" value="S48285"/>
</dbReference>
<dbReference type="RefSeq" id="NP_009679.2">
    <molecule id="P38088-2"/>
    <property type="nucleotide sequence ID" value="NM_001178469.2"/>
</dbReference>
<dbReference type="SMR" id="P38088"/>
<dbReference type="BioGRID" id="32823">
    <property type="interactions" value="221"/>
</dbReference>
<dbReference type="DIP" id="DIP-6526N"/>
<dbReference type="FunCoup" id="P38088">
    <property type="interactions" value="1353"/>
</dbReference>
<dbReference type="IntAct" id="P38088">
    <property type="interactions" value="42"/>
</dbReference>
<dbReference type="MINT" id="P38088"/>
<dbReference type="STRING" id="4932.YBR121C"/>
<dbReference type="iPTMnet" id="P38088"/>
<dbReference type="PaxDb" id="4932-YBR121C"/>
<dbReference type="PeptideAtlas" id="P38088"/>
<dbReference type="EnsemblFungi" id="YBR121C_mRNA">
    <molecule id="P38088-2"/>
    <property type="protein sequence ID" value="YBR121C"/>
    <property type="gene ID" value="YBR121C"/>
</dbReference>
<dbReference type="GeneID" id="852418"/>
<dbReference type="KEGG" id="sce:YBR121C"/>
<dbReference type="AGR" id="SGD:S000000325"/>
<dbReference type="SGD" id="S000000325">
    <property type="gene designation" value="GRS1"/>
</dbReference>
<dbReference type="eggNOG" id="KOG2298">
    <property type="taxonomic scope" value="Eukaryota"/>
</dbReference>
<dbReference type="GeneTree" id="ENSGT00940000153759"/>
<dbReference type="HOGENOM" id="CLU_015515_1_0_1"/>
<dbReference type="InParanoid" id="P38088"/>
<dbReference type="OMA" id="MEMQYFV"/>
<dbReference type="OrthoDB" id="57698at2759"/>
<dbReference type="BioCyc" id="YEAST:G3O-29078-MONOMER"/>
<dbReference type="BRENDA" id="6.1.1.14">
    <property type="organism ID" value="984"/>
</dbReference>
<dbReference type="BioGRID-ORCS" id="852418">
    <property type="hits" value="5 hits in 10 CRISPR screens"/>
</dbReference>
<dbReference type="PRO" id="PR:P38088"/>
<dbReference type="Proteomes" id="UP000002311">
    <property type="component" value="Chromosome II"/>
</dbReference>
<dbReference type="RNAct" id="P38088">
    <property type="molecule type" value="protein"/>
</dbReference>
<dbReference type="GO" id="GO:0005737">
    <property type="term" value="C:cytoplasm"/>
    <property type="evidence" value="ECO:0000315"/>
    <property type="project" value="SGD"/>
</dbReference>
<dbReference type="GO" id="GO:0005759">
    <property type="term" value="C:mitochondrial matrix"/>
    <property type="evidence" value="ECO:0007669"/>
    <property type="project" value="UniProtKB-SubCell"/>
</dbReference>
<dbReference type="GO" id="GO:0005739">
    <property type="term" value="C:mitochondrion"/>
    <property type="evidence" value="ECO:0000315"/>
    <property type="project" value="SGD"/>
</dbReference>
<dbReference type="GO" id="GO:0005524">
    <property type="term" value="F:ATP binding"/>
    <property type="evidence" value="ECO:0007669"/>
    <property type="project" value="UniProtKB-KW"/>
</dbReference>
<dbReference type="GO" id="GO:0141192">
    <property type="term" value="F:ATP:ATP adenylyltransferase activity"/>
    <property type="evidence" value="ECO:0007669"/>
    <property type="project" value="RHEA"/>
</dbReference>
<dbReference type="GO" id="GO:0004820">
    <property type="term" value="F:glycine-tRNA ligase activity"/>
    <property type="evidence" value="ECO:0000314"/>
    <property type="project" value="SGD"/>
</dbReference>
<dbReference type="GO" id="GO:0046983">
    <property type="term" value="F:protein dimerization activity"/>
    <property type="evidence" value="ECO:0000250"/>
    <property type="project" value="UniProtKB"/>
</dbReference>
<dbReference type="GO" id="GO:1990825">
    <property type="term" value="F:sequence-specific mRNA binding"/>
    <property type="evidence" value="ECO:0000314"/>
    <property type="project" value="SGD"/>
</dbReference>
<dbReference type="GO" id="GO:0015966">
    <property type="term" value="P:diadenosine tetraphosphate biosynthetic process"/>
    <property type="evidence" value="ECO:0000250"/>
    <property type="project" value="UniProtKB"/>
</dbReference>
<dbReference type="GO" id="GO:0006353">
    <property type="term" value="P:DNA-templated transcription termination"/>
    <property type="evidence" value="ECO:0000315"/>
    <property type="project" value="SGD"/>
</dbReference>
<dbReference type="GO" id="GO:0006426">
    <property type="term" value="P:glycyl-tRNA aminoacylation"/>
    <property type="evidence" value="ECO:0000315"/>
    <property type="project" value="SGD"/>
</dbReference>
<dbReference type="GO" id="GO:0070150">
    <property type="term" value="P:mitochondrial glycyl-tRNA aminoacylation"/>
    <property type="evidence" value="ECO:0000315"/>
    <property type="project" value="SGD"/>
</dbReference>
<dbReference type="CDD" id="cd00774">
    <property type="entry name" value="GlyRS-like_core"/>
    <property type="match status" value="1"/>
</dbReference>
<dbReference type="CDD" id="cd00858">
    <property type="entry name" value="GlyRS_anticodon"/>
    <property type="match status" value="1"/>
</dbReference>
<dbReference type="FunFam" id="3.30.720.200:FF:000001">
    <property type="entry name" value="Glycine--tRNA ligase 2"/>
    <property type="match status" value="1"/>
</dbReference>
<dbReference type="FunFam" id="3.40.50.800:FF:000004">
    <property type="entry name" value="Glycine--tRNA ligase 2"/>
    <property type="match status" value="1"/>
</dbReference>
<dbReference type="FunFam" id="3.30.930.10:FF:000158">
    <property type="entry name" value="Glycyl-tRNA synthetase"/>
    <property type="match status" value="1"/>
</dbReference>
<dbReference type="FunFam" id="3.30.40.230:FF:000002">
    <property type="entry name" value="Glycyl-tRNA synthetase 1"/>
    <property type="match status" value="1"/>
</dbReference>
<dbReference type="FunFam" id="3.30.930.10:FF:000010">
    <property type="entry name" value="Glycyl-tRNA synthetase 1"/>
    <property type="match status" value="1"/>
</dbReference>
<dbReference type="Gene3D" id="3.30.40.230">
    <property type="match status" value="1"/>
</dbReference>
<dbReference type="Gene3D" id="3.30.720.200">
    <property type="match status" value="1"/>
</dbReference>
<dbReference type="Gene3D" id="3.40.50.800">
    <property type="entry name" value="Anticodon-binding domain"/>
    <property type="match status" value="1"/>
</dbReference>
<dbReference type="Gene3D" id="3.30.930.10">
    <property type="entry name" value="Bira Bifunctional Protein, Domain 2"/>
    <property type="match status" value="1"/>
</dbReference>
<dbReference type="InterPro" id="IPR006195">
    <property type="entry name" value="aa-tRNA-synth_II"/>
</dbReference>
<dbReference type="InterPro" id="IPR045864">
    <property type="entry name" value="aa-tRNA-synth_II/BPL/LPL"/>
</dbReference>
<dbReference type="InterPro" id="IPR004154">
    <property type="entry name" value="Anticodon-bd"/>
</dbReference>
<dbReference type="InterPro" id="IPR036621">
    <property type="entry name" value="Anticodon-bd_dom_sf"/>
</dbReference>
<dbReference type="InterPro" id="IPR027031">
    <property type="entry name" value="Gly-tRNA_synthase/POLG2"/>
</dbReference>
<dbReference type="InterPro" id="IPR033731">
    <property type="entry name" value="GlyRS-like_core"/>
</dbReference>
<dbReference type="InterPro" id="IPR002315">
    <property type="entry name" value="tRNA-synt_gly"/>
</dbReference>
<dbReference type="NCBIfam" id="TIGR00389">
    <property type="entry name" value="glyS_dimeric"/>
    <property type="match status" value="1"/>
</dbReference>
<dbReference type="NCBIfam" id="NF003211">
    <property type="entry name" value="PRK04173.1"/>
    <property type="match status" value="1"/>
</dbReference>
<dbReference type="PANTHER" id="PTHR10745:SF0">
    <property type="entry name" value="GLYCINE--TRNA LIGASE"/>
    <property type="match status" value="1"/>
</dbReference>
<dbReference type="PANTHER" id="PTHR10745">
    <property type="entry name" value="GLYCYL-TRNA SYNTHETASE/DNA POLYMERASE SUBUNIT GAMMA-2"/>
    <property type="match status" value="1"/>
</dbReference>
<dbReference type="Pfam" id="PF03129">
    <property type="entry name" value="HGTP_anticodon"/>
    <property type="match status" value="1"/>
</dbReference>
<dbReference type="PRINTS" id="PR01043">
    <property type="entry name" value="TRNASYNTHGLY"/>
</dbReference>
<dbReference type="SUPFAM" id="SSF52954">
    <property type="entry name" value="Class II aaRS ABD-related"/>
    <property type="match status" value="1"/>
</dbReference>
<dbReference type="SUPFAM" id="SSF55681">
    <property type="entry name" value="Class II aaRS and biotin synthetases"/>
    <property type="match status" value="1"/>
</dbReference>
<dbReference type="PROSITE" id="PS50862">
    <property type="entry name" value="AA_TRNA_LIGASE_II"/>
    <property type="match status" value="1"/>
</dbReference>
<proteinExistence type="evidence at protein level"/>
<evidence type="ECO:0000250" key="1">
    <source>
        <dbReference type="UniProtKB" id="P41250"/>
    </source>
</evidence>
<evidence type="ECO:0000255" key="2"/>
<evidence type="ECO:0000269" key="3">
    <source>
    </source>
</evidence>
<evidence type="ECO:0000269" key="4">
    <source>
    </source>
</evidence>
<evidence type="ECO:0000305" key="5"/>
<evidence type="ECO:0000305" key="6">
    <source>
    </source>
</evidence>
<evidence type="ECO:0007744" key="7">
    <source>
    </source>
</evidence>
<evidence type="ECO:0007744" key="8">
    <source>
    </source>
</evidence>
<evidence type="ECO:0007744" key="9">
    <source>
    </source>
</evidence>
<evidence type="ECO:0007744" key="10">
    <source>
    </source>
</evidence>
<evidence type="ECO:0007744" key="11">
    <source>
    </source>
</evidence>
<comment type="function">
    <text evidence="1 4">Catalyzes the ATP-dependent ligation of glycine to the 3'-end of its cognate tRNA, via the formation of an aminoacyl-adenylate intermediate (Gly-AMP) (PubMed:23816885). Also produces diadenosine tetraphosphate (Ap4A), a universal pleiotropic signaling molecule needed for cell regulation pathways, by direct condensation of 2 ATPs. Thereby, may play a special role in Ap4A homeostasis (By similarity).</text>
</comment>
<comment type="catalytic activity">
    <reaction evidence="4">
        <text>tRNA(Gly) + glycine + ATP = glycyl-tRNA(Gly) + AMP + diphosphate</text>
        <dbReference type="Rhea" id="RHEA:16013"/>
        <dbReference type="Rhea" id="RHEA-COMP:9664"/>
        <dbReference type="Rhea" id="RHEA-COMP:9683"/>
        <dbReference type="ChEBI" id="CHEBI:30616"/>
        <dbReference type="ChEBI" id="CHEBI:33019"/>
        <dbReference type="ChEBI" id="CHEBI:57305"/>
        <dbReference type="ChEBI" id="CHEBI:78442"/>
        <dbReference type="ChEBI" id="CHEBI:78522"/>
        <dbReference type="ChEBI" id="CHEBI:456215"/>
        <dbReference type="EC" id="6.1.1.14"/>
    </reaction>
    <physiologicalReaction direction="left-to-right" evidence="6">
        <dbReference type="Rhea" id="RHEA:16014"/>
    </physiologicalReaction>
</comment>
<comment type="catalytic activity">
    <reaction evidence="1">
        <text>2 ATP + H(+) = P(1),P(4)-bis(5'-adenosyl) tetraphosphate + diphosphate</text>
        <dbReference type="Rhea" id="RHEA:34935"/>
        <dbReference type="ChEBI" id="CHEBI:15378"/>
        <dbReference type="ChEBI" id="CHEBI:30616"/>
        <dbReference type="ChEBI" id="CHEBI:33019"/>
        <dbReference type="ChEBI" id="CHEBI:58141"/>
    </reaction>
</comment>
<comment type="biophysicochemical properties">
    <kinetics>
        <KM evidence="4">135 uM for glycine (at 25 degrees Celsius)</KM>
        <KM evidence="4">0.33 uM for tRNA(Gly) (at 25 degrees Celsius)</KM>
        <text evidence="4">kcat is 0.38 sec(-1) for the aminoacylation reaction (at 25 degrees Celsius).</text>
    </kinetics>
</comment>
<comment type="subunit">
    <text evidence="1">Homodimer.</text>
</comment>
<comment type="subcellular location">
    <molecule>Isoform Cytoplasmic</molecule>
    <subcellularLocation>
        <location>Cytoplasm</location>
    </subcellularLocation>
</comment>
<comment type="subcellular location">
    <molecule>Isoform Mitochondrial</molecule>
    <subcellularLocation>
        <location>Mitochondrion matrix</location>
    </subcellularLocation>
</comment>
<comment type="alternative products">
    <event type="alternative initiation"/>
    <isoform>
        <id>P38088-1</id>
        <name>Mitochondrial</name>
        <sequence type="displayed"/>
    </isoform>
    <isoform>
        <id>P38088-2</id>
        <name>Cytoplasmic</name>
        <sequence type="described" ref="VSP_041147"/>
    </isoform>
</comment>
<comment type="miscellaneous">
    <text evidence="3">Present with 98400 molecules/cell in log phase SD medium.</text>
</comment>
<comment type="miscellaneous">
    <molecule>Isoform Mitochondrial</molecule>
    <text>Produced by alternative initiation at an upstream UUG codon in-frame of the first AUG used for isoform Cytoplasmic.</text>
</comment>
<comment type="similarity">
    <text evidence="5">Belongs to the class-II aminoacyl-tRNA synthetase family.</text>
</comment>
<comment type="caution">
    <text evidence="5">GRS1, which appears to be a duplication of GRS2, is necessary and sufficient for both mitochondrial and cytoplasmic glycyl-tRNA synthetase activities, suggesting that GRS2 may not be essential.</text>
</comment>
<comment type="sequence caution" evidence="5">
    <conflict type="erroneous initiation">
        <sequence resource="EMBL-CDS" id="CAA55623"/>
    </conflict>
    <text>Truncated N-terminus.</text>
</comment>
<comment type="sequence caution" evidence="5">
    <conflict type="erroneous initiation">
        <sequence resource="EMBL-CDS" id="CAA85078"/>
    </conflict>
    <text>Truncated N-terminus.</text>
</comment>
<comment type="sequence caution" evidence="5">
    <conflict type="erroneous initiation">
        <sequence resource="EMBL-CDS" id="DAA07239"/>
    </conflict>
    <text>Truncated N-terminus.</text>
</comment>
<keyword id="KW-0007">Acetylation</keyword>
<keyword id="KW-0024">Alternative initiation</keyword>
<keyword id="KW-0030">Aminoacyl-tRNA synthetase</keyword>
<keyword id="KW-0067">ATP-binding</keyword>
<keyword id="KW-0963">Cytoplasm</keyword>
<keyword id="KW-0436">Ligase</keyword>
<keyword id="KW-0496">Mitochondrion</keyword>
<keyword id="KW-0547">Nucleotide-binding</keyword>
<keyword id="KW-0597">Phosphoprotein</keyword>
<keyword id="KW-0648">Protein biosynthesis</keyword>
<keyword id="KW-1185">Reference proteome</keyword>
<keyword id="KW-0808">Transferase</keyword>
<keyword id="KW-0809">Transit peptide</keyword>
<organism>
    <name type="scientific">Saccharomyces cerevisiae (strain ATCC 204508 / S288c)</name>
    <name type="common">Baker's yeast</name>
    <dbReference type="NCBI Taxonomy" id="559292"/>
    <lineage>
        <taxon>Eukaryota</taxon>
        <taxon>Fungi</taxon>
        <taxon>Dikarya</taxon>
        <taxon>Ascomycota</taxon>
        <taxon>Saccharomycotina</taxon>
        <taxon>Saccharomycetes</taxon>
        <taxon>Saccharomycetales</taxon>
        <taxon>Saccharomycetaceae</taxon>
        <taxon>Saccharomyces</taxon>
    </lineage>
</organism>
<sequence>MSFFNISRRFYSQIVKKSVKIKRMSVEDIKKARAAVPFNREQLESVLRGRFFYAPAFDLYGGVSGLYDYGPPGCAFQNNIIDAWRKHFILEEDMLEVDCTMLTPYEVLKTSGHVDKFSDWMCRDLKTGEIFRADHLVEEVLEARLKGDQEARGLVEDANAAAKDDAEKKKRKKKVKQIKAVKLDDDVVKEYEEILAKIDGYSGPELGELMEKYDIGNPVTGETLESPRAFNLMFETAIGPSGQLKGYLRPETAQGQFLNFNKLLEFNNSKTPFASASIGKSFRNEISPRAGLLRVREFLMAEIEHFVDPLDKSHPKFNEIKDIKLSFLPRDVQEAGSTEPIVKTVGEAVASRMVDNETLGYFIARIYQFLMKIGVDESKLRFRQHMANEMAHYAADCWDGELKTSYGWIECVGCADRSAYDLTVHSKKTKEKLVVRQKLDNPIEVTKWEIDLTKKLFGPKFRKDAPKVESHLLNMSQDDLASKAELLKANGKFTIKVDGVDGEVELDDKLVKIEQRTKVEHVREYVPSVIEPSFGIGRIIYSVFEHSFWNRPEDNARSVLSFPPLVAPTKVLLVPLSNHKDLVPVTTEVAKILRKSQIPFKIDDSGVSIGKRYARNDELGTPFGVTIDFESAKDHSVTLRERDSTKQVRGSVENVIKAIRDITYNGASWEEGTKDLTPFIAQAEAEAETD</sequence>
<accession>P38088</accession>
<accession>D6VQB9</accession>
<feature type="transit peptide" description="Mitochondrion" evidence="2 11">
    <location>
        <begin position="1"/>
        <end position="24"/>
    </location>
</feature>
<feature type="chain" id="PRO_0000073005" description="Glycine--tRNA ligase 1, mitochondrial">
    <location>
        <begin position="25"/>
        <end position="690"/>
    </location>
</feature>
<feature type="binding site" evidence="1">
    <location>
        <position position="251"/>
    </location>
    <ligand>
        <name>glycine</name>
        <dbReference type="ChEBI" id="CHEBI:57305"/>
    </ligand>
</feature>
<feature type="binding site" evidence="1">
    <location>
        <begin position="283"/>
        <end position="285"/>
    </location>
    <ligand>
        <name>ATP</name>
        <dbReference type="ChEBI" id="CHEBI:30616"/>
    </ligand>
</feature>
<feature type="binding site" evidence="1">
    <location>
        <begin position="294"/>
        <end position="295"/>
    </location>
    <ligand>
        <name>ATP</name>
        <dbReference type="ChEBI" id="CHEBI:30616"/>
    </ligand>
</feature>
<feature type="binding site" evidence="1">
    <location>
        <position position="302"/>
    </location>
    <ligand>
        <name>glycine</name>
        <dbReference type="ChEBI" id="CHEBI:57305"/>
    </ligand>
</feature>
<feature type="binding site" evidence="1">
    <location>
        <begin position="410"/>
        <end position="411"/>
    </location>
    <ligand>
        <name>ATP</name>
        <dbReference type="ChEBI" id="CHEBI:30616"/>
    </ligand>
</feature>
<feature type="binding site" evidence="1">
    <location>
        <begin position="531"/>
        <end position="533"/>
    </location>
    <ligand>
        <name>glycine</name>
        <dbReference type="ChEBI" id="CHEBI:57305"/>
    </ligand>
</feature>
<feature type="binding site" evidence="1">
    <location>
        <position position="538"/>
    </location>
    <ligand>
        <name>ATP</name>
        <dbReference type="ChEBI" id="CHEBI:30616"/>
    </ligand>
</feature>
<feature type="modified residue" description="N-acetylserine" evidence="11">
    <location>
        <position position="25"/>
    </location>
</feature>
<feature type="modified residue" description="Phosphoserine" evidence="7 8 9 10">
    <location>
        <position position="226"/>
    </location>
</feature>
<feature type="modified residue" description="Phosphoserine" evidence="9 10">
    <location>
        <position position="476"/>
    </location>
</feature>
<feature type="modified residue" description="Phosphoserine" evidence="9">
    <location>
        <position position="528"/>
    </location>
</feature>
<feature type="modified residue" description="Phosphothreonine" evidence="10">
    <location>
        <position position="689"/>
    </location>
</feature>
<feature type="splice variant" id="VSP_041147" description="In isoform Cytoplasmic.">
    <location>
        <begin position="1"/>
        <end position="23"/>
    </location>
</feature>
<feature type="sequence conflict" description="In Ref. 1; CAA55623 and 2; CAA85078." evidence="5" ref="1 2">
    <original>TT</original>
    <variation>HH</variation>
    <location>
        <begin position="586"/>
        <end position="587"/>
    </location>
</feature>
<gene>
    <name type="primary">GRS1</name>
    <name type="ordered locus">YBR121C</name>
    <name type="ORF">YBR0917</name>
</gene>
<reference key="1">
    <citation type="journal article" date="1994" name="Yeast">
        <title>Analysis of a 70 kb region on the right arm of yeast chromosome II.</title>
        <authorList>
            <person name="Mannhaupt G."/>
            <person name="Stucka R."/>
            <person name="Ehnle S."/>
            <person name="Vetter I."/>
            <person name="Feldmann H."/>
        </authorList>
    </citation>
    <scope>NUCLEOTIDE SEQUENCE [GENOMIC DNA]</scope>
    <source>
        <strain>ATCC 204508 / S288c</strain>
    </source>
</reference>
<reference key="2">
    <citation type="journal article" date="1994" name="EMBO J.">
        <title>Complete DNA sequence of yeast chromosome II.</title>
        <authorList>
            <person name="Feldmann H."/>
            <person name="Aigle M."/>
            <person name="Aljinovic G."/>
            <person name="Andre B."/>
            <person name="Baclet M.C."/>
            <person name="Barthe C."/>
            <person name="Baur A."/>
            <person name="Becam A.-M."/>
            <person name="Biteau N."/>
            <person name="Boles E."/>
            <person name="Brandt T."/>
            <person name="Brendel M."/>
            <person name="Brueckner M."/>
            <person name="Bussereau F."/>
            <person name="Christiansen C."/>
            <person name="Contreras R."/>
            <person name="Crouzet M."/>
            <person name="Cziepluch C."/>
            <person name="Demolis N."/>
            <person name="Delaveau T."/>
            <person name="Doignon F."/>
            <person name="Domdey H."/>
            <person name="Duesterhus S."/>
            <person name="Dubois E."/>
            <person name="Dujon B."/>
            <person name="El Bakkoury M."/>
            <person name="Entian K.-D."/>
            <person name="Feuermann M."/>
            <person name="Fiers W."/>
            <person name="Fobo G.M."/>
            <person name="Fritz C."/>
            <person name="Gassenhuber J."/>
            <person name="Glansdorff N."/>
            <person name="Goffeau A."/>
            <person name="Grivell L.A."/>
            <person name="de Haan M."/>
            <person name="Hein C."/>
            <person name="Herbert C.J."/>
            <person name="Hollenberg C.P."/>
            <person name="Holmstroem K."/>
            <person name="Jacq C."/>
            <person name="Jacquet M."/>
            <person name="Jauniaux J.-C."/>
            <person name="Jonniaux J.-L."/>
            <person name="Kallesoee T."/>
            <person name="Kiesau P."/>
            <person name="Kirchrath L."/>
            <person name="Koetter P."/>
            <person name="Korol S."/>
            <person name="Liebl S."/>
            <person name="Logghe M."/>
            <person name="Lohan A.J.E."/>
            <person name="Louis E.J."/>
            <person name="Li Z.Y."/>
            <person name="Maat M.J."/>
            <person name="Mallet L."/>
            <person name="Mannhaupt G."/>
            <person name="Messenguy F."/>
            <person name="Miosga T."/>
            <person name="Molemans F."/>
            <person name="Mueller S."/>
            <person name="Nasr F."/>
            <person name="Obermaier B."/>
            <person name="Perea J."/>
            <person name="Pierard A."/>
            <person name="Piravandi E."/>
            <person name="Pohl F.M."/>
            <person name="Pohl T.M."/>
            <person name="Potier S."/>
            <person name="Proft M."/>
            <person name="Purnelle B."/>
            <person name="Ramezani Rad M."/>
            <person name="Rieger M."/>
            <person name="Rose M."/>
            <person name="Schaaff-Gerstenschlaeger I."/>
            <person name="Scherens B."/>
            <person name="Schwarzlose C."/>
            <person name="Skala J."/>
            <person name="Slonimski P.P."/>
            <person name="Smits P.H.M."/>
            <person name="Souciet J.-L."/>
            <person name="Steensma H.Y."/>
            <person name="Stucka R."/>
            <person name="Urrestarazu L.A."/>
            <person name="van der Aart Q.J.M."/>
            <person name="Van Dyck L."/>
            <person name="Vassarotti A."/>
            <person name="Vetter I."/>
            <person name="Vierendeels F."/>
            <person name="Vissers S."/>
            <person name="Wagner G."/>
            <person name="de Wergifosse P."/>
            <person name="Wolfe K.H."/>
            <person name="Zagulski M."/>
            <person name="Zimmermann F.K."/>
            <person name="Mewes H.-W."/>
            <person name="Kleine K."/>
        </authorList>
    </citation>
    <scope>NUCLEOTIDE SEQUENCE [LARGE SCALE GENOMIC DNA]</scope>
    <source>
        <strain>ATCC 204508 / S288c</strain>
    </source>
</reference>
<reference key="3">
    <citation type="journal article" date="2014" name="G3 (Bethesda)">
        <title>The reference genome sequence of Saccharomyces cerevisiae: Then and now.</title>
        <authorList>
            <person name="Engel S.R."/>
            <person name="Dietrich F.S."/>
            <person name="Fisk D.G."/>
            <person name="Binkley G."/>
            <person name="Balakrishnan R."/>
            <person name="Costanzo M.C."/>
            <person name="Dwight S.S."/>
            <person name="Hitz B.C."/>
            <person name="Karra K."/>
            <person name="Nash R.S."/>
            <person name="Weng S."/>
            <person name="Wong E.D."/>
            <person name="Lloyd P."/>
            <person name="Skrzypek M.S."/>
            <person name="Miyasato S.R."/>
            <person name="Simison M."/>
            <person name="Cherry J.M."/>
        </authorList>
    </citation>
    <scope>GENOME REANNOTATION</scope>
    <scope>SEQUENCE REVISION TO 586-587</scope>
    <source>
        <strain>ATCC 204508 / S288c</strain>
    </source>
</reference>
<reference key="4">
    <citation type="journal article" date="2000" name="J. Biol. Chem.">
        <title>One of two genes encoding glycyl-tRNA synthetase in Saccharomyces cerevisiae provides mitochondrial and cytoplasmic functions.</title>
        <authorList>
            <person name="Turner R.J."/>
            <person name="Lovato M."/>
            <person name="Schimmel P."/>
        </authorList>
    </citation>
    <scope>FUNCTION</scope>
    <scope>SUBCELLULAR LOCATION</scope>
</reference>
<reference key="5">
    <citation type="journal article" date="2003" name="Mol. Cell">
        <title>Assigning function to yeast proteins by integration of technologies.</title>
        <authorList>
            <person name="Hazbun T.R."/>
            <person name="Malmstroem L."/>
            <person name="Anderson S."/>
            <person name="Graczyk B.J."/>
            <person name="Fox B."/>
            <person name="Riffle M."/>
            <person name="Sundin B.A."/>
            <person name="Aranda J.D."/>
            <person name="McDonald W.H."/>
            <person name="Chiu C.-H."/>
            <person name="Snydsman B.E."/>
            <person name="Bradley P."/>
            <person name="Muller E.G.D."/>
            <person name="Fields S."/>
            <person name="Baker D."/>
            <person name="Yates J.R. III"/>
            <person name="Davis T.N."/>
        </authorList>
    </citation>
    <scope>IDENTIFICATION BY MASS SPECTROMETRY</scope>
</reference>
<reference key="6">
    <citation type="journal article" date="2003" name="Nature">
        <title>Global analysis of protein expression in yeast.</title>
        <authorList>
            <person name="Ghaemmaghami S."/>
            <person name="Huh W.-K."/>
            <person name="Bower K."/>
            <person name="Howson R.W."/>
            <person name="Belle A."/>
            <person name="Dephoure N."/>
            <person name="O'Shea E.K."/>
            <person name="Weissman J.S."/>
        </authorList>
    </citation>
    <scope>LEVEL OF PROTEIN EXPRESSION [LARGE SCALE ANALYSIS]</scope>
</reference>
<reference key="7">
    <citation type="journal article" date="2004" name="J. Biol. Chem.">
        <title>Translation initiation from a naturally occurring non-AUG codon in Saccharomyces cerevisiae.</title>
        <authorList>
            <person name="Chang K.J."/>
            <person name="Wang C.C."/>
        </authorList>
    </citation>
    <scope>ALTERNATIVE INITIATION</scope>
</reference>
<reference key="8">
    <citation type="journal article" date="2005" name="Mol. Cell. Proteomics">
        <title>Quantitative phosphoproteomics applied to the yeast pheromone signaling pathway.</title>
        <authorList>
            <person name="Gruhler A."/>
            <person name="Olsen J.V."/>
            <person name="Mohammed S."/>
            <person name="Mortensen P."/>
            <person name="Faergeman N.J."/>
            <person name="Mann M."/>
            <person name="Jensen O.N."/>
        </authorList>
    </citation>
    <scope>PHOSPHORYLATION [LARGE SCALE ANALYSIS] AT SER-226</scope>
    <scope>IDENTIFICATION BY MASS SPECTROMETRY [LARGE SCALE ANALYSIS]</scope>
    <source>
        <strain>YAL6B</strain>
    </source>
</reference>
<reference key="9">
    <citation type="journal article" date="2007" name="J. Proteome Res.">
        <title>Large-scale phosphorylation analysis of alpha-factor-arrested Saccharomyces cerevisiae.</title>
        <authorList>
            <person name="Li X."/>
            <person name="Gerber S.A."/>
            <person name="Rudner A.D."/>
            <person name="Beausoleil S.A."/>
            <person name="Haas W."/>
            <person name="Villen J."/>
            <person name="Elias J.E."/>
            <person name="Gygi S.P."/>
        </authorList>
    </citation>
    <scope>PHOSPHORYLATION [LARGE SCALE ANALYSIS] AT SER-226</scope>
    <scope>IDENTIFICATION BY MASS SPECTROMETRY [LARGE SCALE ANALYSIS]</scope>
    <source>
        <strain>ADR376</strain>
    </source>
</reference>
<reference key="10">
    <citation type="journal article" date="2008" name="Mol. Cell. Proteomics">
        <title>A multidimensional chromatography technology for in-depth phosphoproteome analysis.</title>
        <authorList>
            <person name="Albuquerque C.P."/>
            <person name="Smolka M.B."/>
            <person name="Payne S.H."/>
            <person name="Bafna V."/>
            <person name="Eng J."/>
            <person name="Zhou H."/>
        </authorList>
    </citation>
    <scope>PHOSPHORYLATION [LARGE SCALE ANALYSIS] AT SER-226; SER-476 AND SER-528</scope>
    <scope>IDENTIFICATION BY MASS SPECTROMETRY [LARGE SCALE ANALYSIS]</scope>
</reference>
<reference key="11">
    <citation type="journal article" date="2009" name="Science">
        <title>Global analysis of Cdk1 substrate phosphorylation sites provides insights into evolution.</title>
        <authorList>
            <person name="Holt L.J."/>
            <person name="Tuch B.B."/>
            <person name="Villen J."/>
            <person name="Johnson A.D."/>
            <person name="Gygi S.P."/>
            <person name="Morgan D.O."/>
        </authorList>
    </citation>
    <scope>PHOSPHORYLATION [LARGE SCALE ANALYSIS] AT SER-226; SER-476 AND THR-689</scope>
    <scope>IDENTIFICATION BY MASS SPECTROMETRY [LARGE SCALE ANALYSIS]</scope>
</reference>
<reference key="12">
    <citation type="journal article" date="2012" name="Proc. Natl. Acad. Sci. U.S.A.">
        <title>N-terminal acetylome analyses and functional insights of the N-terminal acetyltransferase NatB.</title>
        <authorList>
            <person name="Van Damme P."/>
            <person name="Lasa M."/>
            <person name="Polevoda B."/>
            <person name="Gazquez C."/>
            <person name="Elosegui-Artola A."/>
            <person name="Kim D.S."/>
            <person name="De Juan-Pardo E."/>
            <person name="Demeyer K."/>
            <person name="Hole K."/>
            <person name="Larrea E."/>
            <person name="Timmerman E."/>
            <person name="Prieto J."/>
            <person name="Arnesen T."/>
            <person name="Sherman F."/>
            <person name="Gevaert K."/>
            <person name="Aldabe R."/>
        </authorList>
    </citation>
    <scope>ACETYLATION [LARGE SCALE ANALYSIS] AT SER-25</scope>
    <scope>CLEAVAGE OF TRANSIT PEPTIDE [LARGE SCALE ANALYSIS] AFTER MET-24</scope>
    <scope>IDENTIFICATION BY MASS SPECTROMETRY [LARGE SCALE ANALYSIS]</scope>
</reference>
<reference key="13">
    <citation type="journal article" date="2013" name="Mol. Cell. Biol.">
        <title>An insertion peptide in yeast glycyl-tRNA synthetase facilitates both productive docking and catalysis of cognate tRNAs.</title>
        <authorList>
            <person name="Wu Y.H."/>
            <person name="Chang C.P."/>
            <person name="Chien C.I."/>
            <person name="Tseng Y.K."/>
            <person name="Wang C.C."/>
        </authorList>
    </citation>
    <scope>FUNCTION</scope>
    <scope>CATALYTIC ACTIVITY</scope>
    <scope>BIOPHYSICOCHEMICAL PROPERTIES</scope>
</reference>